<evidence type="ECO:0000255" key="1">
    <source>
        <dbReference type="HAMAP-Rule" id="MF_01547"/>
    </source>
</evidence>
<feature type="chain" id="PRO_1000215453" description="Ribosomal RNA large subunit methyltransferase E">
    <location>
        <begin position="1"/>
        <end position="208"/>
    </location>
</feature>
<feature type="active site" description="Proton acceptor" evidence="1">
    <location>
        <position position="163"/>
    </location>
</feature>
<feature type="binding site" evidence="1">
    <location>
        <position position="62"/>
    </location>
    <ligand>
        <name>S-adenosyl-L-methionine</name>
        <dbReference type="ChEBI" id="CHEBI:59789"/>
    </ligand>
</feature>
<feature type="binding site" evidence="1">
    <location>
        <position position="64"/>
    </location>
    <ligand>
        <name>S-adenosyl-L-methionine</name>
        <dbReference type="ChEBI" id="CHEBI:59789"/>
    </ligand>
</feature>
<feature type="binding site" evidence="1">
    <location>
        <position position="82"/>
    </location>
    <ligand>
        <name>S-adenosyl-L-methionine</name>
        <dbReference type="ChEBI" id="CHEBI:59789"/>
    </ligand>
</feature>
<feature type="binding site" evidence="1">
    <location>
        <position position="98"/>
    </location>
    <ligand>
        <name>S-adenosyl-L-methionine</name>
        <dbReference type="ChEBI" id="CHEBI:59789"/>
    </ligand>
</feature>
<feature type="binding site" evidence="1">
    <location>
        <position position="123"/>
    </location>
    <ligand>
        <name>S-adenosyl-L-methionine</name>
        <dbReference type="ChEBI" id="CHEBI:59789"/>
    </ligand>
</feature>
<accession>C5BFB0</accession>
<name>RLME_EDWI9</name>
<gene>
    <name evidence="1" type="primary">rlmE</name>
    <name evidence="1" type="synonym">ftsJ</name>
    <name evidence="1" type="synonym">rrmJ</name>
    <name type="ordered locus">NT01EI_0458</name>
</gene>
<protein>
    <recommendedName>
        <fullName evidence="1">Ribosomal RNA large subunit methyltransferase E</fullName>
        <ecNumber evidence="1">2.1.1.166</ecNumber>
    </recommendedName>
    <alternativeName>
        <fullName evidence="1">23S rRNA Um2552 methyltransferase</fullName>
    </alternativeName>
    <alternativeName>
        <fullName evidence="1">rRNA (uridine-2'-O-)-methyltransferase</fullName>
    </alternativeName>
</protein>
<sequence length="208" mass="23094">MGKKRSASSSRWLQEHFSDKYVQQAQKKGLRSRAWFKLDEIQGTDKIFRPGMTVVDLGAAPGGWSQYVVTQIGDKGRVIACDLLPMDPIVGVDFLQGDFRDELVLAALMERVGDAKVQVVMSDMAPNMSGTPSVDIPRAMYLVELAFEMAKDVLAPGGSFVVKVFQGEGFDEYLGQIRSLFTKVKIRKPEASRARSREVYIVATGRKL</sequence>
<comment type="function">
    <text evidence="1">Specifically methylates the uridine in position 2552 of 23S rRNA at the 2'-O position of the ribose in the fully assembled 50S ribosomal subunit.</text>
</comment>
<comment type="catalytic activity">
    <reaction evidence="1">
        <text>uridine(2552) in 23S rRNA + S-adenosyl-L-methionine = 2'-O-methyluridine(2552) in 23S rRNA + S-adenosyl-L-homocysteine + H(+)</text>
        <dbReference type="Rhea" id="RHEA:42720"/>
        <dbReference type="Rhea" id="RHEA-COMP:10202"/>
        <dbReference type="Rhea" id="RHEA-COMP:10203"/>
        <dbReference type="ChEBI" id="CHEBI:15378"/>
        <dbReference type="ChEBI" id="CHEBI:57856"/>
        <dbReference type="ChEBI" id="CHEBI:59789"/>
        <dbReference type="ChEBI" id="CHEBI:65315"/>
        <dbReference type="ChEBI" id="CHEBI:74478"/>
        <dbReference type="EC" id="2.1.1.166"/>
    </reaction>
</comment>
<comment type="subcellular location">
    <subcellularLocation>
        <location evidence="1">Cytoplasm</location>
    </subcellularLocation>
</comment>
<comment type="similarity">
    <text evidence="1">Belongs to the class I-like SAM-binding methyltransferase superfamily. RNA methyltransferase RlmE family.</text>
</comment>
<keyword id="KW-0963">Cytoplasm</keyword>
<keyword id="KW-0489">Methyltransferase</keyword>
<keyword id="KW-0698">rRNA processing</keyword>
<keyword id="KW-0949">S-adenosyl-L-methionine</keyword>
<keyword id="KW-0808">Transferase</keyword>
<reference key="1">
    <citation type="submission" date="2009-03" db="EMBL/GenBank/DDBJ databases">
        <title>Complete genome sequence of Edwardsiella ictaluri 93-146.</title>
        <authorList>
            <person name="Williams M.L."/>
            <person name="Gillaspy A.F."/>
            <person name="Dyer D.W."/>
            <person name="Thune R.L."/>
            <person name="Waldbieser G.C."/>
            <person name="Schuster S.C."/>
            <person name="Gipson J."/>
            <person name="Zaitshik J."/>
            <person name="Landry C."/>
            <person name="Lawrence M.L."/>
        </authorList>
    </citation>
    <scope>NUCLEOTIDE SEQUENCE [LARGE SCALE GENOMIC DNA]</scope>
    <source>
        <strain>93-146</strain>
    </source>
</reference>
<dbReference type="EC" id="2.1.1.166" evidence="1"/>
<dbReference type="EMBL" id="CP001600">
    <property type="protein sequence ID" value="ACR67696.1"/>
    <property type="molecule type" value="Genomic_DNA"/>
</dbReference>
<dbReference type="RefSeq" id="WP_015869898.1">
    <property type="nucleotide sequence ID" value="NZ_CP169062.1"/>
</dbReference>
<dbReference type="SMR" id="C5BFB0"/>
<dbReference type="STRING" id="67780.B6E78_13050"/>
<dbReference type="GeneID" id="69537545"/>
<dbReference type="KEGG" id="eic:NT01EI_0458"/>
<dbReference type="PATRIC" id="fig|634503.3.peg.417"/>
<dbReference type="HOGENOM" id="CLU_009422_4_0_6"/>
<dbReference type="OrthoDB" id="9790080at2"/>
<dbReference type="Proteomes" id="UP000001485">
    <property type="component" value="Chromosome"/>
</dbReference>
<dbReference type="GO" id="GO:0005737">
    <property type="term" value="C:cytoplasm"/>
    <property type="evidence" value="ECO:0007669"/>
    <property type="project" value="UniProtKB-SubCell"/>
</dbReference>
<dbReference type="GO" id="GO:0008650">
    <property type="term" value="F:rRNA (uridine-2'-O-)-methyltransferase activity"/>
    <property type="evidence" value="ECO:0007669"/>
    <property type="project" value="UniProtKB-UniRule"/>
</dbReference>
<dbReference type="CDD" id="cd02440">
    <property type="entry name" value="AdoMet_MTases"/>
    <property type="match status" value="1"/>
</dbReference>
<dbReference type="FunFam" id="3.40.50.150:FF:000005">
    <property type="entry name" value="Ribosomal RNA large subunit methyltransferase E"/>
    <property type="match status" value="1"/>
</dbReference>
<dbReference type="Gene3D" id="3.40.50.150">
    <property type="entry name" value="Vaccinia Virus protein VP39"/>
    <property type="match status" value="1"/>
</dbReference>
<dbReference type="HAMAP" id="MF_01547">
    <property type="entry name" value="RNA_methyltr_E"/>
    <property type="match status" value="1"/>
</dbReference>
<dbReference type="InterPro" id="IPR050082">
    <property type="entry name" value="RNA_methyltr_RlmE"/>
</dbReference>
<dbReference type="InterPro" id="IPR002877">
    <property type="entry name" value="RNA_MeTrfase_FtsJ_dom"/>
</dbReference>
<dbReference type="InterPro" id="IPR015507">
    <property type="entry name" value="rRNA-MeTfrase_E"/>
</dbReference>
<dbReference type="InterPro" id="IPR004512">
    <property type="entry name" value="rRNA_MeTrfase_gammaproteobac"/>
</dbReference>
<dbReference type="InterPro" id="IPR029063">
    <property type="entry name" value="SAM-dependent_MTases_sf"/>
</dbReference>
<dbReference type="NCBIfam" id="NF008390">
    <property type="entry name" value="PRK11188.1"/>
    <property type="match status" value="1"/>
</dbReference>
<dbReference type="NCBIfam" id="TIGR00438">
    <property type="entry name" value="rrmJ"/>
    <property type="match status" value="1"/>
</dbReference>
<dbReference type="PANTHER" id="PTHR10920">
    <property type="entry name" value="RIBOSOMAL RNA METHYLTRANSFERASE"/>
    <property type="match status" value="1"/>
</dbReference>
<dbReference type="PANTHER" id="PTHR10920:SF18">
    <property type="entry name" value="RRNA METHYLTRANSFERASE 2, MITOCHONDRIAL"/>
    <property type="match status" value="1"/>
</dbReference>
<dbReference type="Pfam" id="PF01728">
    <property type="entry name" value="FtsJ"/>
    <property type="match status" value="1"/>
</dbReference>
<dbReference type="PIRSF" id="PIRSF005461">
    <property type="entry name" value="23S_rRNA_mtase"/>
    <property type="match status" value="1"/>
</dbReference>
<dbReference type="SUPFAM" id="SSF53335">
    <property type="entry name" value="S-adenosyl-L-methionine-dependent methyltransferases"/>
    <property type="match status" value="1"/>
</dbReference>
<organism>
    <name type="scientific">Edwardsiella ictaluri (strain 93-146)</name>
    <dbReference type="NCBI Taxonomy" id="634503"/>
    <lineage>
        <taxon>Bacteria</taxon>
        <taxon>Pseudomonadati</taxon>
        <taxon>Pseudomonadota</taxon>
        <taxon>Gammaproteobacteria</taxon>
        <taxon>Enterobacterales</taxon>
        <taxon>Hafniaceae</taxon>
        <taxon>Edwardsiella</taxon>
    </lineage>
</organism>
<proteinExistence type="inferred from homology"/>